<gene>
    <name type="ordered locus">CYB_0992</name>
</gene>
<accession>Q2JMR2</accession>
<feature type="chain" id="PRO_0000383296" description="Nucleotide-binding protein CYB_0992">
    <location>
        <begin position="1"/>
        <end position="327"/>
    </location>
</feature>
<feature type="binding site" evidence="1">
    <location>
        <begin position="12"/>
        <end position="19"/>
    </location>
    <ligand>
        <name>ATP</name>
        <dbReference type="ChEBI" id="CHEBI:30616"/>
    </ligand>
</feature>
<comment type="function">
    <text evidence="1">Displays ATPase and GTPase activities.</text>
</comment>
<comment type="similarity">
    <text evidence="1">Belongs to the RapZ-like family.</text>
</comment>
<dbReference type="EMBL" id="CP000240">
    <property type="protein sequence ID" value="ABD01970.1"/>
    <property type="molecule type" value="Genomic_DNA"/>
</dbReference>
<dbReference type="RefSeq" id="WP_011432625.1">
    <property type="nucleotide sequence ID" value="NC_007776.1"/>
</dbReference>
<dbReference type="SMR" id="Q2JMR2"/>
<dbReference type="STRING" id="321332.CYB_0992"/>
<dbReference type="KEGG" id="cyb:CYB_0992"/>
<dbReference type="eggNOG" id="COG1660">
    <property type="taxonomic scope" value="Bacteria"/>
</dbReference>
<dbReference type="HOGENOM" id="CLU_059558_0_0_3"/>
<dbReference type="OrthoDB" id="9784461at2"/>
<dbReference type="Proteomes" id="UP000001938">
    <property type="component" value="Chromosome"/>
</dbReference>
<dbReference type="GO" id="GO:0005524">
    <property type="term" value="F:ATP binding"/>
    <property type="evidence" value="ECO:0007669"/>
    <property type="project" value="UniProtKB-UniRule"/>
</dbReference>
<dbReference type="GO" id="GO:0005525">
    <property type="term" value="F:GTP binding"/>
    <property type="evidence" value="ECO:0007669"/>
    <property type="project" value="UniProtKB-UniRule"/>
</dbReference>
<dbReference type="HAMAP" id="MF_00636">
    <property type="entry name" value="RapZ_like"/>
    <property type="match status" value="1"/>
</dbReference>
<dbReference type="InterPro" id="IPR027417">
    <property type="entry name" value="P-loop_NTPase"/>
</dbReference>
<dbReference type="InterPro" id="IPR005337">
    <property type="entry name" value="RapZ-like"/>
</dbReference>
<dbReference type="InterPro" id="IPR053930">
    <property type="entry name" value="RapZ-like_N"/>
</dbReference>
<dbReference type="InterPro" id="IPR053931">
    <property type="entry name" value="RapZ_C"/>
</dbReference>
<dbReference type="NCBIfam" id="NF003828">
    <property type="entry name" value="PRK05416.1"/>
    <property type="match status" value="1"/>
</dbReference>
<dbReference type="PANTHER" id="PTHR30448">
    <property type="entry name" value="RNASE ADAPTER PROTEIN RAPZ"/>
    <property type="match status" value="1"/>
</dbReference>
<dbReference type="PANTHER" id="PTHR30448:SF0">
    <property type="entry name" value="RNASE ADAPTER PROTEIN RAPZ"/>
    <property type="match status" value="1"/>
</dbReference>
<dbReference type="Pfam" id="PF22740">
    <property type="entry name" value="PapZ_C"/>
    <property type="match status" value="1"/>
</dbReference>
<dbReference type="Pfam" id="PF03668">
    <property type="entry name" value="RapZ-like_N"/>
    <property type="match status" value="1"/>
</dbReference>
<dbReference type="SUPFAM" id="SSF52540">
    <property type="entry name" value="P-loop containing nucleoside triphosphate hydrolases"/>
    <property type="match status" value="1"/>
</dbReference>
<organism>
    <name type="scientific">Synechococcus sp. (strain JA-2-3B'a(2-13))</name>
    <name type="common">Cyanobacteria bacterium Yellowstone B-Prime</name>
    <dbReference type="NCBI Taxonomy" id="321332"/>
    <lineage>
        <taxon>Bacteria</taxon>
        <taxon>Bacillati</taxon>
        <taxon>Cyanobacteriota</taxon>
        <taxon>Cyanophyceae</taxon>
        <taxon>Synechococcales</taxon>
        <taxon>Synechococcaceae</taxon>
        <taxon>Synechococcus</taxon>
    </lineage>
</organism>
<sequence>MSVAPPVLVIAGLTGAGKTLAIQQLEQLGYTSLEGIPPAQVIPLVEAMRTHHAALAISLNLHAQEYRDQVPTLAAWVQSQGIPFLFLEARSPVLLNRLSAHRRPHPYGEAAGLWEAIEQERLALAPVRERCTHWLDTSDLNAQQLRQQLQALVQGIPQPLNLRLVSFGFKYGVPPDANLLFDVRFLPNPFFQPHLRRLTGQDPLLQEFLFADPITQSTYQHILSLIKAFWPHYRAERRPHLTLAIGCTGGQHRSVALVERLAQDLQPWTVPAGNHVLPDLNVQVQHRHLLDSQRELEARFGPVPGEAGVAQQQVRIPLAGVPAPSHA</sequence>
<evidence type="ECO:0000255" key="1">
    <source>
        <dbReference type="HAMAP-Rule" id="MF_00636"/>
    </source>
</evidence>
<reference key="1">
    <citation type="journal article" date="2007" name="ISME J.">
        <title>Population level functional diversity in a microbial community revealed by comparative genomic and metagenomic analyses.</title>
        <authorList>
            <person name="Bhaya D."/>
            <person name="Grossman A.R."/>
            <person name="Steunou A.-S."/>
            <person name="Khuri N."/>
            <person name="Cohan F.M."/>
            <person name="Hamamura N."/>
            <person name="Melendrez M.C."/>
            <person name="Bateson M.M."/>
            <person name="Ward D.M."/>
            <person name="Heidelberg J.F."/>
        </authorList>
    </citation>
    <scope>NUCLEOTIDE SEQUENCE [LARGE SCALE GENOMIC DNA]</scope>
    <source>
        <strain>JA-2-3B'a(2-13)</strain>
    </source>
</reference>
<proteinExistence type="inferred from homology"/>
<keyword id="KW-0067">ATP-binding</keyword>
<keyword id="KW-0342">GTP-binding</keyword>
<keyword id="KW-0547">Nucleotide-binding</keyword>
<keyword id="KW-1185">Reference proteome</keyword>
<name>Y992_SYNJB</name>
<protein>
    <recommendedName>
        <fullName evidence="1">Nucleotide-binding protein CYB_0992</fullName>
    </recommendedName>
</protein>